<organism>
    <name type="scientific">Methanocaldococcus jannaschii (strain ATCC 43067 / DSM 2661 / JAL-1 / JCM 10045 / NBRC 100440)</name>
    <name type="common">Methanococcus jannaschii</name>
    <dbReference type="NCBI Taxonomy" id="243232"/>
    <lineage>
        <taxon>Archaea</taxon>
        <taxon>Methanobacteriati</taxon>
        <taxon>Methanobacteriota</taxon>
        <taxon>Methanomada group</taxon>
        <taxon>Methanococci</taxon>
        <taxon>Methanococcales</taxon>
        <taxon>Methanocaldococcaceae</taxon>
        <taxon>Methanocaldococcus</taxon>
    </lineage>
</organism>
<feature type="chain" id="PRO_0000171004" description="Putative molybdopterin biosynthesis protein MJ0666">
    <location>
        <begin position="1"/>
        <end position="398"/>
    </location>
</feature>
<gene>
    <name type="ordered locus">MJ0666</name>
</gene>
<dbReference type="EMBL" id="L77117">
    <property type="protein sequence ID" value="AAB98661.1"/>
    <property type="molecule type" value="Genomic_DNA"/>
</dbReference>
<dbReference type="PIR" id="B64383">
    <property type="entry name" value="B64383"/>
</dbReference>
<dbReference type="RefSeq" id="WP_010870171.1">
    <property type="nucleotide sequence ID" value="NC_000909.1"/>
</dbReference>
<dbReference type="SMR" id="Q58080"/>
<dbReference type="FunCoup" id="Q58080">
    <property type="interactions" value="135"/>
</dbReference>
<dbReference type="STRING" id="243232.MJ_0666"/>
<dbReference type="PaxDb" id="243232-MJ_0666"/>
<dbReference type="EnsemblBacteria" id="AAB98661">
    <property type="protein sequence ID" value="AAB98661"/>
    <property type="gene ID" value="MJ_0666"/>
</dbReference>
<dbReference type="GeneID" id="1451532"/>
<dbReference type="KEGG" id="mja:MJ_0666"/>
<dbReference type="eggNOG" id="arCOG00216">
    <property type="taxonomic scope" value="Archaea"/>
</dbReference>
<dbReference type="HOGENOM" id="CLU_010186_7_2_2"/>
<dbReference type="InParanoid" id="Q58080"/>
<dbReference type="OrthoDB" id="31371at2157"/>
<dbReference type="PhylomeDB" id="Q58080"/>
<dbReference type="UniPathway" id="UPA00344"/>
<dbReference type="Proteomes" id="UP000000805">
    <property type="component" value="Chromosome"/>
</dbReference>
<dbReference type="GO" id="GO:0005737">
    <property type="term" value="C:cytoplasm"/>
    <property type="evidence" value="ECO:0000318"/>
    <property type="project" value="GO_Central"/>
</dbReference>
<dbReference type="GO" id="GO:0061599">
    <property type="term" value="F:molybdopterin molybdotransferase activity"/>
    <property type="evidence" value="ECO:0000318"/>
    <property type="project" value="GO_Central"/>
</dbReference>
<dbReference type="GO" id="GO:0006777">
    <property type="term" value="P:Mo-molybdopterin cofactor biosynthetic process"/>
    <property type="evidence" value="ECO:0000318"/>
    <property type="project" value="GO_Central"/>
</dbReference>
<dbReference type="CDD" id="cd00887">
    <property type="entry name" value="MoeA"/>
    <property type="match status" value="1"/>
</dbReference>
<dbReference type="FunFam" id="2.170.190.11:FF:000005">
    <property type="entry name" value="Molybdopterin biosynthesis MoeA protein"/>
    <property type="match status" value="1"/>
</dbReference>
<dbReference type="FunFam" id="2.40.340.10:FF:000005">
    <property type="entry name" value="Molybdopterin molybdenumtransferase MoeA"/>
    <property type="match status" value="1"/>
</dbReference>
<dbReference type="Gene3D" id="3.40.980.10">
    <property type="entry name" value="MoaB/Mog-like domain"/>
    <property type="match status" value="1"/>
</dbReference>
<dbReference type="Gene3D" id="2.40.340.10">
    <property type="entry name" value="MoeA, C-terminal, domain IV"/>
    <property type="match status" value="1"/>
</dbReference>
<dbReference type="Gene3D" id="3.90.105.10">
    <property type="entry name" value="Molybdopterin biosynthesis moea protein, domain 2"/>
    <property type="match status" value="1"/>
</dbReference>
<dbReference type="Gene3D" id="2.170.190.11">
    <property type="entry name" value="Molybdopterin biosynthesis moea protein, domain 3"/>
    <property type="match status" value="1"/>
</dbReference>
<dbReference type="InterPro" id="IPR036425">
    <property type="entry name" value="MoaB/Mog-like_dom_sf"/>
</dbReference>
<dbReference type="InterPro" id="IPR001453">
    <property type="entry name" value="MoaB/Mog_dom"/>
</dbReference>
<dbReference type="InterPro" id="IPR008284">
    <property type="entry name" value="MoCF_biosynth_CS"/>
</dbReference>
<dbReference type="InterPro" id="IPR038987">
    <property type="entry name" value="MoeA-like"/>
</dbReference>
<dbReference type="InterPro" id="IPR005111">
    <property type="entry name" value="MoeA_C_domain_IV"/>
</dbReference>
<dbReference type="InterPro" id="IPR036688">
    <property type="entry name" value="MoeA_C_domain_IV_sf"/>
</dbReference>
<dbReference type="InterPro" id="IPR005110">
    <property type="entry name" value="MoeA_linker/N"/>
</dbReference>
<dbReference type="InterPro" id="IPR036135">
    <property type="entry name" value="MoeA_linker/N_sf"/>
</dbReference>
<dbReference type="NCBIfam" id="TIGR00177">
    <property type="entry name" value="molyb_syn"/>
    <property type="match status" value="1"/>
</dbReference>
<dbReference type="PANTHER" id="PTHR10192">
    <property type="entry name" value="MOLYBDOPTERIN BIOSYNTHESIS PROTEIN"/>
    <property type="match status" value="1"/>
</dbReference>
<dbReference type="PANTHER" id="PTHR10192:SF19">
    <property type="entry name" value="MOLYBDOPTERIN BIOSYNTHESIS PROTEIN MJ0666-RELATED"/>
    <property type="match status" value="1"/>
</dbReference>
<dbReference type="Pfam" id="PF00994">
    <property type="entry name" value="MoCF_biosynth"/>
    <property type="match status" value="1"/>
</dbReference>
<dbReference type="Pfam" id="PF03454">
    <property type="entry name" value="MoeA_C"/>
    <property type="match status" value="1"/>
</dbReference>
<dbReference type="Pfam" id="PF03453">
    <property type="entry name" value="MoeA_N"/>
    <property type="match status" value="1"/>
</dbReference>
<dbReference type="SMART" id="SM00852">
    <property type="entry name" value="MoCF_biosynth"/>
    <property type="match status" value="1"/>
</dbReference>
<dbReference type="SUPFAM" id="SSF63867">
    <property type="entry name" value="MoeA C-terminal domain-like"/>
    <property type="match status" value="1"/>
</dbReference>
<dbReference type="SUPFAM" id="SSF63882">
    <property type="entry name" value="MoeA N-terminal region -like"/>
    <property type="match status" value="1"/>
</dbReference>
<dbReference type="SUPFAM" id="SSF53218">
    <property type="entry name" value="Molybdenum cofactor biosynthesis proteins"/>
    <property type="match status" value="1"/>
</dbReference>
<dbReference type="PROSITE" id="PS01079">
    <property type="entry name" value="MOCF_BIOSYNTHESIS_2"/>
    <property type="match status" value="1"/>
</dbReference>
<proteinExistence type="inferred from homology"/>
<sequence>MKLIKNLMPLKSAEKIVFEKLSEYLDENKKVKEVDIVEALNRISAEDIKAPIDLPYFNKAAMDGYAVIAEDTFGASETNPIILNLADGDEITYGEAKKIFTGDKLPKNANAVVMKEFCNEVDDFVEVYKTVHPNENVSRIGEDVKKGDVVLKKGEIINPYHLNMLASLGIKKIKVYDLSFGIISTGDELINLDEIRDIEEDISKLDGKIINSNSYMLYGLVKNLGFNAKIYDIVKDDKEKLKKAIKTALSENDALLITGGTSVSERDITVETVRELGDVIVHGVNIRPGKPFGFGIINDKPVFMLSGYPVASAVQFELFIQRFFIERKKVTLPLKRNMASELGRVDFVRVKVDIEVEPIRITGSGVISSLIKSDGYILIPENVEGYEKGELVDVYLLK</sequence>
<comment type="pathway">
    <text>Cofactor biosynthesis; molybdopterin biosynthesis.</text>
</comment>
<comment type="similarity">
    <text evidence="1">Belongs to the MoeA family.</text>
</comment>
<reference key="1">
    <citation type="journal article" date="1996" name="Science">
        <title>Complete genome sequence of the methanogenic archaeon, Methanococcus jannaschii.</title>
        <authorList>
            <person name="Bult C.J."/>
            <person name="White O."/>
            <person name="Olsen G.J."/>
            <person name="Zhou L."/>
            <person name="Fleischmann R.D."/>
            <person name="Sutton G.G."/>
            <person name="Blake J.A."/>
            <person name="FitzGerald L.M."/>
            <person name="Clayton R.A."/>
            <person name="Gocayne J.D."/>
            <person name="Kerlavage A.R."/>
            <person name="Dougherty B.A."/>
            <person name="Tomb J.-F."/>
            <person name="Adams M.D."/>
            <person name="Reich C.I."/>
            <person name="Overbeek R."/>
            <person name="Kirkness E.F."/>
            <person name="Weinstock K.G."/>
            <person name="Merrick J.M."/>
            <person name="Glodek A."/>
            <person name="Scott J.L."/>
            <person name="Geoghagen N.S.M."/>
            <person name="Weidman J.F."/>
            <person name="Fuhrmann J.L."/>
            <person name="Nguyen D."/>
            <person name="Utterback T.R."/>
            <person name="Kelley J.M."/>
            <person name="Peterson J.D."/>
            <person name="Sadow P.W."/>
            <person name="Hanna M.C."/>
            <person name="Cotton M.D."/>
            <person name="Roberts K.M."/>
            <person name="Hurst M.A."/>
            <person name="Kaine B.P."/>
            <person name="Borodovsky M."/>
            <person name="Klenk H.-P."/>
            <person name="Fraser C.M."/>
            <person name="Smith H.O."/>
            <person name="Woese C.R."/>
            <person name="Venter J.C."/>
        </authorList>
    </citation>
    <scope>NUCLEOTIDE SEQUENCE [LARGE SCALE GENOMIC DNA]</scope>
    <source>
        <strain>ATCC 43067 / DSM 2661 / JAL-1 / JCM 10045 / NBRC 100440</strain>
    </source>
</reference>
<protein>
    <recommendedName>
        <fullName>Putative molybdopterin biosynthesis protein MJ0666</fullName>
    </recommendedName>
</protein>
<evidence type="ECO:0000305" key="1"/>
<name>Y666_METJA</name>
<keyword id="KW-0501">Molybdenum cofactor biosynthesis</keyword>
<keyword id="KW-1185">Reference proteome</keyword>
<accession>Q58080</accession>